<accession>A2C0T9</accession>
<reference key="1">
    <citation type="journal article" date="2007" name="PLoS Genet.">
        <title>Patterns and implications of gene gain and loss in the evolution of Prochlorococcus.</title>
        <authorList>
            <person name="Kettler G.C."/>
            <person name="Martiny A.C."/>
            <person name="Huang K."/>
            <person name="Zucker J."/>
            <person name="Coleman M.L."/>
            <person name="Rodrigue S."/>
            <person name="Chen F."/>
            <person name="Lapidus A."/>
            <person name="Ferriera S."/>
            <person name="Johnson J."/>
            <person name="Steglich C."/>
            <person name="Church G.M."/>
            <person name="Richardson P."/>
            <person name="Chisholm S.W."/>
        </authorList>
    </citation>
    <scope>NUCLEOTIDE SEQUENCE [LARGE SCALE GENOMIC DNA]</scope>
    <source>
        <strain>NATL1A</strain>
    </source>
</reference>
<organism>
    <name type="scientific">Prochlorococcus marinus (strain NATL1A)</name>
    <dbReference type="NCBI Taxonomy" id="167555"/>
    <lineage>
        <taxon>Bacteria</taxon>
        <taxon>Bacillati</taxon>
        <taxon>Cyanobacteriota</taxon>
        <taxon>Cyanophyceae</taxon>
        <taxon>Synechococcales</taxon>
        <taxon>Prochlorococcaceae</taxon>
        <taxon>Prochlorococcus</taxon>
    </lineage>
</organism>
<comment type="function">
    <text evidence="1">Nucleotide-binding protein.</text>
</comment>
<comment type="similarity">
    <text evidence="1">Belongs to the YajQ family.</text>
</comment>
<gene>
    <name type="ordered locus">NATL1_05371</name>
</gene>
<name>Y537_PROM1</name>
<evidence type="ECO:0000255" key="1">
    <source>
        <dbReference type="HAMAP-Rule" id="MF_00632"/>
    </source>
</evidence>
<sequence length="165" mass="18971">MPSSYSFDVVSEFDQQELVNAIDQLRREVDQRYDLKDSKTKIDIKEDELSIVSLSDMTIESVKDILLQKATKRNLSLKIFDFQKIETIGGNMVMQIVKLKKGLSQEISKKLSKLVRDNMKKVTASIQGDSLRITGKNKDDLQAAINLIKKQEEELDIALQFQNYR</sequence>
<protein>
    <recommendedName>
        <fullName evidence="1">Nucleotide-binding protein NATL1_05371</fullName>
    </recommendedName>
</protein>
<proteinExistence type="inferred from homology"/>
<feature type="chain" id="PRO_1000147312" description="Nucleotide-binding protein NATL1_05371">
    <location>
        <begin position="1"/>
        <end position="165"/>
    </location>
</feature>
<dbReference type="EMBL" id="CP000553">
    <property type="protein sequence ID" value="ABM75099.1"/>
    <property type="molecule type" value="Genomic_DNA"/>
</dbReference>
<dbReference type="RefSeq" id="WP_011823277.1">
    <property type="nucleotide sequence ID" value="NC_008819.1"/>
</dbReference>
<dbReference type="SMR" id="A2C0T9"/>
<dbReference type="KEGG" id="pme:NATL1_05371"/>
<dbReference type="eggNOG" id="COG1666">
    <property type="taxonomic scope" value="Bacteria"/>
</dbReference>
<dbReference type="HOGENOM" id="CLU_099839_0_0_3"/>
<dbReference type="Proteomes" id="UP000002592">
    <property type="component" value="Chromosome"/>
</dbReference>
<dbReference type="GO" id="GO:0005829">
    <property type="term" value="C:cytosol"/>
    <property type="evidence" value="ECO:0007669"/>
    <property type="project" value="TreeGrafter"/>
</dbReference>
<dbReference type="GO" id="GO:0000166">
    <property type="term" value="F:nucleotide binding"/>
    <property type="evidence" value="ECO:0007669"/>
    <property type="project" value="TreeGrafter"/>
</dbReference>
<dbReference type="CDD" id="cd11740">
    <property type="entry name" value="YajQ_like"/>
    <property type="match status" value="1"/>
</dbReference>
<dbReference type="Gene3D" id="3.30.70.860">
    <property type="match status" value="1"/>
</dbReference>
<dbReference type="Gene3D" id="3.30.70.990">
    <property type="entry name" value="YajQ-like, domain 2"/>
    <property type="match status" value="1"/>
</dbReference>
<dbReference type="HAMAP" id="MF_00632">
    <property type="entry name" value="YajQ"/>
    <property type="match status" value="1"/>
</dbReference>
<dbReference type="InterPro" id="IPR007551">
    <property type="entry name" value="DUF520"/>
</dbReference>
<dbReference type="InterPro" id="IPR035571">
    <property type="entry name" value="UPF0234-like_C"/>
</dbReference>
<dbReference type="InterPro" id="IPR035570">
    <property type="entry name" value="UPF0234_N"/>
</dbReference>
<dbReference type="InterPro" id="IPR036183">
    <property type="entry name" value="YajQ-like_sf"/>
</dbReference>
<dbReference type="NCBIfam" id="NF003819">
    <property type="entry name" value="PRK05412.1"/>
    <property type="match status" value="1"/>
</dbReference>
<dbReference type="PANTHER" id="PTHR30476">
    <property type="entry name" value="UPF0234 PROTEIN YAJQ"/>
    <property type="match status" value="1"/>
</dbReference>
<dbReference type="PANTHER" id="PTHR30476:SF0">
    <property type="entry name" value="UPF0234 PROTEIN YAJQ"/>
    <property type="match status" value="1"/>
</dbReference>
<dbReference type="Pfam" id="PF04461">
    <property type="entry name" value="DUF520"/>
    <property type="match status" value="1"/>
</dbReference>
<dbReference type="SUPFAM" id="SSF89963">
    <property type="entry name" value="YajQ-like"/>
    <property type="match status" value="2"/>
</dbReference>
<keyword id="KW-0547">Nucleotide-binding</keyword>